<feature type="chain" id="PRO_0000338903" description="Translation initiation factor IF-1">
    <location>
        <begin position="1"/>
        <end position="73"/>
    </location>
</feature>
<feature type="domain" description="S1-like" evidence="1">
    <location>
        <begin position="1"/>
        <end position="72"/>
    </location>
</feature>
<sequence length="73" mass="8286">MSKDDLIQFTGTVIELAPNATFRVKLENGHVIIAHTAGRMRKNRIRILLGDKVTVEMTPYDLTKGRVILRHQS</sequence>
<name>IF1_RICB8</name>
<dbReference type="EMBL" id="CP000849">
    <property type="protein sequence ID" value="ABV79738.1"/>
    <property type="molecule type" value="Genomic_DNA"/>
</dbReference>
<dbReference type="RefSeq" id="WP_011476840.1">
    <property type="nucleotide sequence ID" value="NC_009883.1"/>
</dbReference>
<dbReference type="SMR" id="A8GXY8"/>
<dbReference type="KEGG" id="rbo:A1I_07190"/>
<dbReference type="HOGENOM" id="CLU_151267_1_0_5"/>
<dbReference type="GO" id="GO:0005829">
    <property type="term" value="C:cytosol"/>
    <property type="evidence" value="ECO:0007669"/>
    <property type="project" value="TreeGrafter"/>
</dbReference>
<dbReference type="GO" id="GO:0043022">
    <property type="term" value="F:ribosome binding"/>
    <property type="evidence" value="ECO:0007669"/>
    <property type="project" value="UniProtKB-UniRule"/>
</dbReference>
<dbReference type="GO" id="GO:0019843">
    <property type="term" value="F:rRNA binding"/>
    <property type="evidence" value="ECO:0007669"/>
    <property type="project" value="UniProtKB-UniRule"/>
</dbReference>
<dbReference type="GO" id="GO:0003743">
    <property type="term" value="F:translation initiation factor activity"/>
    <property type="evidence" value="ECO:0007669"/>
    <property type="project" value="UniProtKB-UniRule"/>
</dbReference>
<dbReference type="CDD" id="cd04451">
    <property type="entry name" value="S1_IF1"/>
    <property type="match status" value="1"/>
</dbReference>
<dbReference type="FunFam" id="2.40.50.140:FF:000002">
    <property type="entry name" value="Translation initiation factor IF-1"/>
    <property type="match status" value="1"/>
</dbReference>
<dbReference type="Gene3D" id="2.40.50.140">
    <property type="entry name" value="Nucleic acid-binding proteins"/>
    <property type="match status" value="1"/>
</dbReference>
<dbReference type="HAMAP" id="MF_00075">
    <property type="entry name" value="IF_1"/>
    <property type="match status" value="1"/>
</dbReference>
<dbReference type="InterPro" id="IPR012340">
    <property type="entry name" value="NA-bd_OB-fold"/>
</dbReference>
<dbReference type="InterPro" id="IPR006196">
    <property type="entry name" value="RNA-binding_domain_S1_IF1"/>
</dbReference>
<dbReference type="InterPro" id="IPR004368">
    <property type="entry name" value="TIF_IF1"/>
</dbReference>
<dbReference type="NCBIfam" id="TIGR00008">
    <property type="entry name" value="infA"/>
    <property type="match status" value="1"/>
</dbReference>
<dbReference type="PANTHER" id="PTHR33370">
    <property type="entry name" value="TRANSLATION INITIATION FACTOR IF-1, CHLOROPLASTIC"/>
    <property type="match status" value="1"/>
</dbReference>
<dbReference type="PANTHER" id="PTHR33370:SF1">
    <property type="entry name" value="TRANSLATION INITIATION FACTOR IF-1, CHLOROPLASTIC"/>
    <property type="match status" value="1"/>
</dbReference>
<dbReference type="Pfam" id="PF01176">
    <property type="entry name" value="eIF-1a"/>
    <property type="match status" value="1"/>
</dbReference>
<dbReference type="SUPFAM" id="SSF50249">
    <property type="entry name" value="Nucleic acid-binding proteins"/>
    <property type="match status" value="1"/>
</dbReference>
<dbReference type="PROSITE" id="PS50832">
    <property type="entry name" value="S1_IF1_TYPE"/>
    <property type="match status" value="1"/>
</dbReference>
<organism>
    <name type="scientific">Rickettsia bellii (strain OSU 85-389)</name>
    <dbReference type="NCBI Taxonomy" id="391896"/>
    <lineage>
        <taxon>Bacteria</taxon>
        <taxon>Pseudomonadati</taxon>
        <taxon>Pseudomonadota</taxon>
        <taxon>Alphaproteobacteria</taxon>
        <taxon>Rickettsiales</taxon>
        <taxon>Rickettsiaceae</taxon>
        <taxon>Rickettsieae</taxon>
        <taxon>Rickettsia</taxon>
        <taxon>belli group</taxon>
    </lineage>
</organism>
<comment type="function">
    <text evidence="1">One of the essential components for the initiation of protein synthesis. Stabilizes the binding of IF-2 and IF-3 on the 30S subunit to which N-formylmethionyl-tRNA(fMet) subsequently binds. Helps modulate mRNA selection, yielding the 30S pre-initiation complex (PIC). Upon addition of the 50S ribosomal subunit IF-1, IF-2 and IF-3 are released leaving the mature 70S translation initiation complex.</text>
</comment>
<comment type="subunit">
    <text evidence="1">Component of the 30S ribosomal translation pre-initiation complex which assembles on the 30S ribosome in the order IF-2 and IF-3, IF-1 and N-formylmethionyl-tRNA(fMet); mRNA recruitment can occur at any time during PIC assembly.</text>
</comment>
<comment type="subcellular location">
    <subcellularLocation>
        <location evidence="1">Cytoplasm</location>
    </subcellularLocation>
</comment>
<comment type="similarity">
    <text evidence="1">Belongs to the IF-1 family.</text>
</comment>
<accession>A8GXY8</accession>
<protein>
    <recommendedName>
        <fullName evidence="1">Translation initiation factor IF-1</fullName>
    </recommendedName>
</protein>
<gene>
    <name evidence="1" type="primary">infA</name>
    <name type="ordered locus">A1I_07190</name>
</gene>
<proteinExistence type="inferred from homology"/>
<evidence type="ECO:0000255" key="1">
    <source>
        <dbReference type="HAMAP-Rule" id="MF_00075"/>
    </source>
</evidence>
<keyword id="KW-0963">Cytoplasm</keyword>
<keyword id="KW-0396">Initiation factor</keyword>
<keyword id="KW-0648">Protein biosynthesis</keyword>
<keyword id="KW-0694">RNA-binding</keyword>
<keyword id="KW-0699">rRNA-binding</keyword>
<reference key="1">
    <citation type="submission" date="2007-09" db="EMBL/GenBank/DDBJ databases">
        <title>Complete genome sequencing of Rickettsia bellii.</title>
        <authorList>
            <person name="Madan A."/>
            <person name="Lee H."/>
            <person name="Madan A."/>
            <person name="Yoon J.-G."/>
            <person name="Ryu G.-Y."/>
            <person name="Dasch G."/>
            <person name="Ereemeva M."/>
        </authorList>
    </citation>
    <scope>NUCLEOTIDE SEQUENCE [LARGE SCALE GENOMIC DNA]</scope>
    <source>
        <strain>OSU 85-389</strain>
    </source>
</reference>